<name>KLH18_HUMAN</name>
<accession>O94889</accession>
<accession>A8K612</accession>
<accession>Q7Z3E8</accession>
<accession>Q8N125</accession>
<organism>
    <name type="scientific">Homo sapiens</name>
    <name type="common">Human</name>
    <dbReference type="NCBI Taxonomy" id="9606"/>
    <lineage>
        <taxon>Eukaryota</taxon>
        <taxon>Metazoa</taxon>
        <taxon>Chordata</taxon>
        <taxon>Craniata</taxon>
        <taxon>Vertebrata</taxon>
        <taxon>Euteleostomi</taxon>
        <taxon>Mammalia</taxon>
        <taxon>Eutheria</taxon>
        <taxon>Euarchontoglires</taxon>
        <taxon>Primates</taxon>
        <taxon>Haplorrhini</taxon>
        <taxon>Catarrhini</taxon>
        <taxon>Hominidae</taxon>
        <taxon>Homo</taxon>
    </lineage>
</organism>
<feature type="chain" id="PRO_0000119122" description="Kelch-like protein 18">
    <location>
        <begin position="1"/>
        <end position="574"/>
    </location>
</feature>
<feature type="domain" description="BTB" evidence="2">
    <location>
        <begin position="66"/>
        <end position="105"/>
    </location>
</feature>
<feature type="domain" description="BACK">
    <location>
        <begin position="140"/>
        <end position="242"/>
    </location>
</feature>
<feature type="repeat" description="Kelch 1">
    <location>
        <begin position="289"/>
        <end position="336"/>
    </location>
</feature>
<feature type="repeat" description="Kelch 2">
    <location>
        <begin position="337"/>
        <end position="383"/>
    </location>
</feature>
<feature type="repeat" description="Kelch 3">
    <location>
        <begin position="384"/>
        <end position="430"/>
    </location>
</feature>
<feature type="repeat" description="Kelch 4">
    <location>
        <begin position="432"/>
        <end position="477"/>
    </location>
</feature>
<feature type="repeat" description="Kelch 5">
    <location>
        <begin position="479"/>
        <end position="524"/>
    </location>
</feature>
<feature type="repeat" description="Kelch 6">
    <location>
        <begin position="525"/>
        <end position="571"/>
    </location>
</feature>
<feature type="splice variant" id="VSP_035974" description="In isoform 2." evidence="5">
    <location>
        <begin position="1"/>
        <end position="65"/>
    </location>
</feature>
<evidence type="ECO:0000250" key="1">
    <source>
        <dbReference type="UniProtKB" id="E9Q4F2"/>
    </source>
</evidence>
<evidence type="ECO:0000255" key="2">
    <source>
        <dbReference type="PROSITE-ProRule" id="PRU00037"/>
    </source>
</evidence>
<evidence type="ECO:0000269" key="3">
    <source>
    </source>
</evidence>
<evidence type="ECO:0000269" key="4">
    <source>
    </source>
</evidence>
<evidence type="ECO:0000303" key="5">
    <source ref="1"/>
</evidence>
<evidence type="ECO:0000305" key="6"/>
<keyword id="KW-0025">Alternative splicing</keyword>
<keyword id="KW-0131">Cell cycle</keyword>
<keyword id="KW-0132">Cell division</keyword>
<keyword id="KW-0880">Kelch repeat</keyword>
<keyword id="KW-0498">Mitosis</keyword>
<keyword id="KW-1267">Proteomics identification</keyword>
<keyword id="KW-1185">Reference proteome</keyword>
<keyword id="KW-0677">Repeat</keyword>
<keyword id="KW-0833">Ubl conjugation pathway</keyword>
<proteinExistence type="evidence at protein level"/>
<reference key="1">
    <citation type="submission" date="2001-05" db="EMBL/GenBank/DDBJ databases">
        <title>Identification of immuno-peptidmics that are recognized by tumor-reactive CTL generated from TIL of colon cancer patients.</title>
        <authorList>
            <person name="Shichijo S."/>
            <person name="Itoh K."/>
        </authorList>
    </citation>
    <scope>NUCLEOTIDE SEQUENCE [LARGE SCALE MRNA] (ISOFORM 2)</scope>
    <source>
        <tissue>Colon adenocarcinoma</tissue>
    </source>
</reference>
<reference key="2">
    <citation type="journal article" date="2004" name="Nat. Genet.">
        <title>Complete sequencing and characterization of 21,243 full-length human cDNAs.</title>
        <authorList>
            <person name="Ota T."/>
            <person name="Suzuki Y."/>
            <person name="Nishikawa T."/>
            <person name="Otsuki T."/>
            <person name="Sugiyama T."/>
            <person name="Irie R."/>
            <person name="Wakamatsu A."/>
            <person name="Hayashi K."/>
            <person name="Sato H."/>
            <person name="Nagai K."/>
            <person name="Kimura K."/>
            <person name="Makita H."/>
            <person name="Sekine M."/>
            <person name="Obayashi M."/>
            <person name="Nishi T."/>
            <person name="Shibahara T."/>
            <person name="Tanaka T."/>
            <person name="Ishii S."/>
            <person name="Yamamoto J."/>
            <person name="Saito K."/>
            <person name="Kawai Y."/>
            <person name="Isono Y."/>
            <person name="Nakamura Y."/>
            <person name="Nagahari K."/>
            <person name="Murakami K."/>
            <person name="Yasuda T."/>
            <person name="Iwayanagi T."/>
            <person name="Wagatsuma M."/>
            <person name="Shiratori A."/>
            <person name="Sudo H."/>
            <person name="Hosoiri T."/>
            <person name="Kaku Y."/>
            <person name="Kodaira H."/>
            <person name="Kondo H."/>
            <person name="Sugawara M."/>
            <person name="Takahashi M."/>
            <person name="Kanda K."/>
            <person name="Yokoi T."/>
            <person name="Furuya T."/>
            <person name="Kikkawa E."/>
            <person name="Omura Y."/>
            <person name="Abe K."/>
            <person name="Kamihara K."/>
            <person name="Katsuta N."/>
            <person name="Sato K."/>
            <person name="Tanikawa M."/>
            <person name="Yamazaki M."/>
            <person name="Ninomiya K."/>
            <person name="Ishibashi T."/>
            <person name="Yamashita H."/>
            <person name="Murakawa K."/>
            <person name="Fujimori K."/>
            <person name="Tanai H."/>
            <person name="Kimata M."/>
            <person name="Watanabe M."/>
            <person name="Hiraoka S."/>
            <person name="Chiba Y."/>
            <person name="Ishida S."/>
            <person name="Ono Y."/>
            <person name="Takiguchi S."/>
            <person name="Watanabe S."/>
            <person name="Yosida M."/>
            <person name="Hotuta T."/>
            <person name="Kusano J."/>
            <person name="Kanehori K."/>
            <person name="Takahashi-Fujii A."/>
            <person name="Hara H."/>
            <person name="Tanase T.-O."/>
            <person name="Nomura Y."/>
            <person name="Togiya S."/>
            <person name="Komai F."/>
            <person name="Hara R."/>
            <person name="Takeuchi K."/>
            <person name="Arita M."/>
            <person name="Imose N."/>
            <person name="Musashino K."/>
            <person name="Yuuki H."/>
            <person name="Oshima A."/>
            <person name="Sasaki N."/>
            <person name="Aotsuka S."/>
            <person name="Yoshikawa Y."/>
            <person name="Matsunawa H."/>
            <person name="Ichihara T."/>
            <person name="Shiohata N."/>
            <person name="Sano S."/>
            <person name="Moriya S."/>
            <person name="Momiyama H."/>
            <person name="Satoh N."/>
            <person name="Takami S."/>
            <person name="Terashima Y."/>
            <person name="Suzuki O."/>
            <person name="Nakagawa S."/>
            <person name="Senoh A."/>
            <person name="Mizoguchi H."/>
            <person name="Goto Y."/>
            <person name="Shimizu F."/>
            <person name="Wakebe H."/>
            <person name="Hishigaki H."/>
            <person name="Watanabe T."/>
            <person name="Sugiyama A."/>
            <person name="Takemoto M."/>
            <person name="Kawakami B."/>
            <person name="Yamazaki M."/>
            <person name="Watanabe K."/>
            <person name="Kumagai A."/>
            <person name="Itakura S."/>
            <person name="Fukuzumi Y."/>
            <person name="Fujimori Y."/>
            <person name="Komiyama M."/>
            <person name="Tashiro H."/>
            <person name="Tanigami A."/>
            <person name="Fujiwara T."/>
            <person name="Ono T."/>
            <person name="Yamada K."/>
            <person name="Fujii Y."/>
            <person name="Ozaki K."/>
            <person name="Hirao M."/>
            <person name="Ohmori Y."/>
            <person name="Kawabata A."/>
            <person name="Hikiji T."/>
            <person name="Kobatake N."/>
            <person name="Inagaki H."/>
            <person name="Ikema Y."/>
            <person name="Okamoto S."/>
            <person name="Okitani R."/>
            <person name="Kawakami T."/>
            <person name="Noguchi S."/>
            <person name="Itoh T."/>
            <person name="Shigeta K."/>
            <person name="Senba T."/>
            <person name="Matsumura K."/>
            <person name="Nakajima Y."/>
            <person name="Mizuno T."/>
            <person name="Morinaga M."/>
            <person name="Sasaki M."/>
            <person name="Togashi T."/>
            <person name="Oyama M."/>
            <person name="Hata H."/>
            <person name="Watanabe M."/>
            <person name="Komatsu T."/>
            <person name="Mizushima-Sugano J."/>
            <person name="Satoh T."/>
            <person name="Shirai Y."/>
            <person name="Takahashi Y."/>
            <person name="Nakagawa K."/>
            <person name="Okumura K."/>
            <person name="Nagase T."/>
            <person name="Nomura N."/>
            <person name="Kikuchi H."/>
            <person name="Masuho Y."/>
            <person name="Yamashita R."/>
            <person name="Nakai K."/>
            <person name="Yada T."/>
            <person name="Nakamura Y."/>
            <person name="Ohara O."/>
            <person name="Isogai T."/>
            <person name="Sugano S."/>
        </authorList>
    </citation>
    <scope>NUCLEOTIDE SEQUENCE [LARGE SCALE MRNA] (ISOFORM 1)</scope>
    <source>
        <tissue>Brain</tissue>
    </source>
</reference>
<reference key="3">
    <citation type="journal article" date="2007" name="BMC Genomics">
        <title>The full-ORF clone resource of the German cDNA consortium.</title>
        <authorList>
            <person name="Bechtel S."/>
            <person name="Rosenfelder H."/>
            <person name="Duda A."/>
            <person name="Schmidt C.P."/>
            <person name="Ernst U."/>
            <person name="Wellenreuther R."/>
            <person name="Mehrle A."/>
            <person name="Schuster C."/>
            <person name="Bahr A."/>
            <person name="Bloecker H."/>
            <person name="Heubner D."/>
            <person name="Hoerlein A."/>
            <person name="Michel G."/>
            <person name="Wedler H."/>
            <person name="Koehrer K."/>
            <person name="Ottenwaelder B."/>
            <person name="Poustka A."/>
            <person name="Wiemann S."/>
            <person name="Schupp I."/>
        </authorList>
    </citation>
    <scope>NUCLEOTIDE SEQUENCE [LARGE SCALE MRNA] (ISOFORM 1)</scope>
    <source>
        <tissue>Retina</tissue>
    </source>
</reference>
<reference key="4">
    <citation type="journal article" date="2006" name="Nature">
        <title>The DNA sequence, annotation and analysis of human chromosome 3.</title>
        <authorList>
            <person name="Muzny D.M."/>
            <person name="Scherer S.E."/>
            <person name="Kaul R."/>
            <person name="Wang J."/>
            <person name="Yu J."/>
            <person name="Sudbrak R."/>
            <person name="Buhay C.J."/>
            <person name="Chen R."/>
            <person name="Cree A."/>
            <person name="Ding Y."/>
            <person name="Dugan-Rocha S."/>
            <person name="Gill R."/>
            <person name="Gunaratne P."/>
            <person name="Harris R.A."/>
            <person name="Hawes A.C."/>
            <person name="Hernandez J."/>
            <person name="Hodgson A.V."/>
            <person name="Hume J."/>
            <person name="Jackson A."/>
            <person name="Khan Z.M."/>
            <person name="Kovar-Smith C."/>
            <person name="Lewis L.R."/>
            <person name="Lozado R.J."/>
            <person name="Metzker M.L."/>
            <person name="Milosavljevic A."/>
            <person name="Miner G.R."/>
            <person name="Morgan M.B."/>
            <person name="Nazareth L.V."/>
            <person name="Scott G."/>
            <person name="Sodergren E."/>
            <person name="Song X.-Z."/>
            <person name="Steffen D."/>
            <person name="Wei S."/>
            <person name="Wheeler D.A."/>
            <person name="Wright M.W."/>
            <person name="Worley K.C."/>
            <person name="Yuan Y."/>
            <person name="Zhang Z."/>
            <person name="Adams C.Q."/>
            <person name="Ansari-Lari M.A."/>
            <person name="Ayele M."/>
            <person name="Brown M.J."/>
            <person name="Chen G."/>
            <person name="Chen Z."/>
            <person name="Clendenning J."/>
            <person name="Clerc-Blankenburg K.P."/>
            <person name="Chen R."/>
            <person name="Chen Z."/>
            <person name="Davis C."/>
            <person name="Delgado O."/>
            <person name="Dinh H.H."/>
            <person name="Dong W."/>
            <person name="Draper H."/>
            <person name="Ernst S."/>
            <person name="Fu G."/>
            <person name="Gonzalez-Garay M.L."/>
            <person name="Garcia D.K."/>
            <person name="Gillett W."/>
            <person name="Gu J."/>
            <person name="Hao B."/>
            <person name="Haugen E."/>
            <person name="Havlak P."/>
            <person name="He X."/>
            <person name="Hennig S."/>
            <person name="Hu S."/>
            <person name="Huang W."/>
            <person name="Jackson L.R."/>
            <person name="Jacob L.S."/>
            <person name="Kelly S.H."/>
            <person name="Kube M."/>
            <person name="Levy R."/>
            <person name="Li Z."/>
            <person name="Liu B."/>
            <person name="Liu J."/>
            <person name="Liu W."/>
            <person name="Lu J."/>
            <person name="Maheshwari M."/>
            <person name="Nguyen B.-V."/>
            <person name="Okwuonu G.O."/>
            <person name="Palmeiri A."/>
            <person name="Pasternak S."/>
            <person name="Perez L.M."/>
            <person name="Phelps K.A."/>
            <person name="Plopper F.J."/>
            <person name="Qiang B."/>
            <person name="Raymond C."/>
            <person name="Rodriguez R."/>
            <person name="Saenphimmachak C."/>
            <person name="Santibanez J."/>
            <person name="Shen H."/>
            <person name="Shen Y."/>
            <person name="Subramanian S."/>
            <person name="Tabor P.E."/>
            <person name="Verduzco D."/>
            <person name="Waldron L."/>
            <person name="Wang J."/>
            <person name="Wang J."/>
            <person name="Wang Q."/>
            <person name="Williams G.A."/>
            <person name="Wong G.K.-S."/>
            <person name="Yao Z."/>
            <person name="Zhang J."/>
            <person name="Zhang X."/>
            <person name="Zhao G."/>
            <person name="Zhou J."/>
            <person name="Zhou Y."/>
            <person name="Nelson D."/>
            <person name="Lehrach H."/>
            <person name="Reinhardt R."/>
            <person name="Naylor S.L."/>
            <person name="Yang H."/>
            <person name="Olson M."/>
            <person name="Weinstock G."/>
            <person name="Gibbs R.A."/>
        </authorList>
    </citation>
    <scope>NUCLEOTIDE SEQUENCE [LARGE SCALE GENOMIC DNA]</scope>
</reference>
<reference key="5">
    <citation type="submission" date="2005-07" db="EMBL/GenBank/DDBJ databases">
        <authorList>
            <person name="Mural R.J."/>
            <person name="Istrail S."/>
            <person name="Sutton G.G."/>
            <person name="Florea L."/>
            <person name="Halpern A.L."/>
            <person name="Mobarry C.M."/>
            <person name="Lippert R."/>
            <person name="Walenz B."/>
            <person name="Shatkay H."/>
            <person name="Dew I."/>
            <person name="Miller J.R."/>
            <person name="Flanigan M.J."/>
            <person name="Edwards N.J."/>
            <person name="Bolanos R."/>
            <person name="Fasulo D."/>
            <person name="Halldorsson B.V."/>
            <person name="Hannenhalli S."/>
            <person name="Turner R."/>
            <person name="Yooseph S."/>
            <person name="Lu F."/>
            <person name="Nusskern D.R."/>
            <person name="Shue B.C."/>
            <person name="Zheng X.H."/>
            <person name="Zhong F."/>
            <person name="Delcher A.L."/>
            <person name="Huson D.H."/>
            <person name="Kravitz S.A."/>
            <person name="Mouchard L."/>
            <person name="Reinert K."/>
            <person name="Remington K.A."/>
            <person name="Clark A.G."/>
            <person name="Waterman M.S."/>
            <person name="Eichler E.E."/>
            <person name="Adams M.D."/>
            <person name="Hunkapiller M.W."/>
            <person name="Myers E.W."/>
            <person name="Venter J.C."/>
        </authorList>
    </citation>
    <scope>NUCLEOTIDE SEQUENCE [LARGE SCALE GENOMIC DNA]</scope>
</reference>
<reference key="6">
    <citation type="journal article" date="2004" name="Genome Res.">
        <title>The status, quality, and expansion of the NIH full-length cDNA project: the Mammalian Gene Collection (MGC).</title>
        <authorList>
            <consortium name="The MGC Project Team"/>
        </authorList>
    </citation>
    <scope>NUCLEOTIDE SEQUENCE [LARGE SCALE MRNA] OF 26-574 (ISOFORM 1)</scope>
    <source>
        <tissue>Melanoma</tissue>
    </source>
</reference>
<reference key="7">
    <citation type="journal article" date="1998" name="DNA Res.">
        <title>Prediction of the coding sequences of unidentified human genes. XI. The complete sequences of 100 new cDNA clones from brain which code for large proteins in vitro.</title>
        <authorList>
            <person name="Nagase T."/>
            <person name="Ishikawa K."/>
            <person name="Suyama M."/>
            <person name="Kikuno R."/>
            <person name="Miyajima N."/>
            <person name="Tanaka A."/>
            <person name="Kotani H."/>
            <person name="Nomura N."/>
            <person name="Ohara O."/>
        </authorList>
    </citation>
    <scope>NUCLEOTIDE SEQUENCE [LARGE SCALE MRNA] OF 110-574 (ISOFORMS 1/2)</scope>
    <source>
        <tissue>Brain</tissue>
    </source>
</reference>
<reference key="8">
    <citation type="journal article" date="2012" name="Biol. Open">
        <title>The CUL3-KLHL18 ligase regulates mitotic entry and ubiquitylates Aurora-A.</title>
        <authorList>
            <person name="Moghe S."/>
            <person name="Jiang F."/>
            <person name="Miura Y."/>
            <person name="Cerny R.L."/>
            <person name="Tsai M.Y."/>
            <person name="Furukawa M."/>
        </authorList>
    </citation>
    <scope>FUNCTION</scope>
    <scope>INTERACTION WITH AURKA AND CUL3</scope>
</reference>
<reference key="9">
    <citation type="journal article" date="2019" name="EMBO J.">
        <title>Cul3-Klhl18 ubiquitin ligase modulates rod transducin translocation during light-dark adaptation.</title>
        <authorList>
            <person name="Chaya T."/>
            <person name="Tsutsumi R."/>
            <person name="Varner L.R."/>
            <person name="Maeda Y."/>
            <person name="Yoshida S."/>
            <person name="Furukawa T."/>
        </authorList>
    </citation>
    <scope>INTERACTION WITH UNC119</scope>
</reference>
<gene>
    <name type="primary">KLHL18</name>
    <name type="synonym">KIAA0795</name>
    <name type="ORF">OK/SW-cl.74</name>
</gene>
<comment type="function">
    <text evidence="1 3">Substrate-specific adapter of a BCR (BTB-CUL3-RBX1) E3 ubiquitin-protein ligase complex required for mitotic progression and cytokinesis (PubMed:23213400). The BCR(KLHL18) E3 ubiquitin ligase complex mediates the ubiquitination of AURKA leading to its activation at the centrosome which is required for initiating mitotic entry (PubMed:23213400). Regulates light-and dark-dependent alpha-transducin localization changes in rod photoreceptors through UNC119 ubiquitination and degradation (By similarity). Preferentially ubiquitinates the unphosphorylated form of UNC119 over the phosphorylated form (By similarity). In the presence of UNC119, under dark-adapted conditions alpha-transducin mislocalizes from the outer segment to the inner part of rod photoreceptors which leads to decreased photoreceptor damage caused by light (By similarity).</text>
</comment>
<comment type="pathway">
    <text>Protein modification; protein ubiquitination.</text>
</comment>
<comment type="subunit">
    <text evidence="3 4">Interacts with AURKA (PubMed:23213400). Interacts (via BTB domain) with CUL3 (PubMed:23213400). Interacts (via kelch repeats) with UNC119 (PubMed:31696965).</text>
</comment>
<comment type="interaction">
    <interactant intactId="EBI-2510096">
        <id>O94889</id>
    </interactant>
    <interactant intactId="EBI-349854">
        <id>P13569</id>
        <label>CFTR</label>
    </interactant>
    <organismsDiffer>false</organismsDiffer>
    <experiments>3</experiments>
</comment>
<comment type="interaction">
    <interactant intactId="EBI-2510096">
        <id>O94889</id>
    </interactant>
    <interactant intactId="EBI-10177695">
        <id>P26641-2</id>
        <label>EEF1G</label>
    </interactant>
    <organismsDiffer>false</organismsDiffer>
    <experiments>3</experiments>
</comment>
<comment type="interaction">
    <interactant intactId="EBI-2510096">
        <id>O94889</id>
    </interactant>
    <interactant intactId="EBI-21251460">
        <id>O60260-5</id>
        <label>PRKN</label>
    </interactant>
    <organismsDiffer>false</organismsDiffer>
    <experiments>3</experiments>
</comment>
<comment type="alternative products">
    <event type="alternative splicing"/>
    <isoform>
        <id>O94889-1</id>
        <name>1</name>
        <sequence type="displayed"/>
    </isoform>
    <isoform>
        <id>O94889-2</id>
        <name>2</name>
        <sequence type="described" ref="VSP_035974"/>
    </isoform>
</comment>
<comment type="sequence caution" evidence="6">
    <conflict type="erroneous initiation">
        <sequence resource="EMBL-CDS" id="AAH32620"/>
    </conflict>
    <text>Truncated N-terminus.</text>
</comment>
<comment type="sequence caution" evidence="6">
    <conflict type="erroneous initiation">
        <sequence resource="EMBL-CDS" id="CAD97920"/>
    </conflict>
    <text>Extended N-terminus.</text>
</comment>
<sequence length="574" mass="63638">MVEDGAEELEDLVHFSVSELPSRGYGVMEEIRRQGKLCDVTLKIGDHKFSAHRIVLAASIPYFHAMFTNDMMECKQDEIVMQGMDPSALEALINFAYNGNLAIDQQNVQSLLMGASFLQLQSIKDACCTFLRERLHPKNCLGVRQFAETMMCAVLYDAANSFIHQHFVEVSMSEEFLALPLEDVLELVSRDELNVKSEEQVFEAALAWVRYDREQRGPYLPELLSNIRLPLCRPQFLSDRVQQDDLVRCCHKCRDLVDEAKDYHLMPERRPHLPAFRTRPRCCTSIAGLIYAVGGLNSAGDSLNVVEVFDPIANCWERCRPMTTARSRVGVAVVNGLLYAIGGYDGQLRLSTVEAYNPETDTWTRVGSMNSKRSAMGTVVLDGQIYVCGGYDGNSSLSSVETYSPETDKWTVVTSMSSNRSAAGVTVFEGRIYVSGGHDGLQIFSSVEHYNHHTATWHPAAGMLNKRCRHGAASLGSKMFVCGGYDGSGFLSIAEMYSSVADQWCLIVPMHTRRSRVSLVASCGRLYAVGGYDGQSNLSSVEMYDPETDCWTFMAPMACHEGGVGVGCIPLLTI</sequence>
<dbReference type="EMBL" id="AB062478">
    <property type="protein sequence ID" value="BAB93503.1"/>
    <property type="molecule type" value="mRNA"/>
</dbReference>
<dbReference type="EMBL" id="AK291477">
    <property type="protein sequence ID" value="BAF84166.1"/>
    <property type="molecule type" value="mRNA"/>
</dbReference>
<dbReference type="EMBL" id="BX537953">
    <property type="protein sequence ID" value="CAD97920.1"/>
    <property type="status" value="ALT_INIT"/>
    <property type="molecule type" value="mRNA"/>
</dbReference>
<dbReference type="EMBL" id="AC104447">
    <property type="status" value="NOT_ANNOTATED_CDS"/>
    <property type="molecule type" value="Genomic_DNA"/>
</dbReference>
<dbReference type="EMBL" id="CH471055">
    <property type="protein sequence ID" value="EAW64819.1"/>
    <property type="molecule type" value="Genomic_DNA"/>
</dbReference>
<dbReference type="EMBL" id="BC032620">
    <property type="protein sequence ID" value="AAH32620.1"/>
    <property type="status" value="ALT_INIT"/>
    <property type="molecule type" value="mRNA"/>
</dbReference>
<dbReference type="EMBL" id="AB018338">
    <property type="protein sequence ID" value="BAA34515.1"/>
    <property type="molecule type" value="mRNA"/>
</dbReference>
<dbReference type="CCDS" id="CCDS33749.1">
    <molecule id="O94889-1"/>
</dbReference>
<dbReference type="RefSeq" id="NP_079286.2">
    <molecule id="O94889-1"/>
    <property type="nucleotide sequence ID" value="NM_025010.5"/>
</dbReference>
<dbReference type="SMR" id="O94889"/>
<dbReference type="BioGRID" id="116877">
    <property type="interactions" value="45"/>
</dbReference>
<dbReference type="ComplexPortal" id="CPX-8106">
    <property type="entry name" value="CRL3 E3 ubiquitin ligase complex, KLHL18 variant"/>
</dbReference>
<dbReference type="FunCoup" id="O94889">
    <property type="interactions" value="1999"/>
</dbReference>
<dbReference type="IntAct" id="O94889">
    <property type="interactions" value="34"/>
</dbReference>
<dbReference type="MINT" id="O94889"/>
<dbReference type="STRING" id="9606.ENSP00000232766"/>
<dbReference type="iPTMnet" id="O94889"/>
<dbReference type="PhosphoSitePlus" id="O94889"/>
<dbReference type="BioMuta" id="KLHL18"/>
<dbReference type="jPOST" id="O94889"/>
<dbReference type="MassIVE" id="O94889"/>
<dbReference type="PaxDb" id="9606-ENSP00000232766"/>
<dbReference type="PeptideAtlas" id="O94889"/>
<dbReference type="ProteomicsDB" id="50527">
    <molecule id="O94889-1"/>
</dbReference>
<dbReference type="ProteomicsDB" id="50528">
    <molecule id="O94889-2"/>
</dbReference>
<dbReference type="Pumba" id="O94889"/>
<dbReference type="Antibodypedia" id="29881">
    <property type="antibodies" value="58 antibodies from 18 providers"/>
</dbReference>
<dbReference type="DNASU" id="23276"/>
<dbReference type="Ensembl" id="ENST00000232766.6">
    <molecule id="O94889-1"/>
    <property type="protein sequence ID" value="ENSP00000232766.5"/>
    <property type="gene ID" value="ENSG00000114648.12"/>
</dbReference>
<dbReference type="GeneID" id="23276"/>
<dbReference type="KEGG" id="hsa:23276"/>
<dbReference type="MANE-Select" id="ENST00000232766.6">
    <property type="protein sequence ID" value="ENSP00000232766.5"/>
    <property type="RefSeq nucleotide sequence ID" value="NM_025010.5"/>
    <property type="RefSeq protein sequence ID" value="NP_079286.2"/>
</dbReference>
<dbReference type="UCSC" id="uc003crd.4">
    <molecule id="O94889-1"/>
    <property type="organism name" value="human"/>
</dbReference>
<dbReference type="AGR" id="HGNC:29120"/>
<dbReference type="CTD" id="23276"/>
<dbReference type="DisGeNET" id="23276"/>
<dbReference type="GeneCards" id="KLHL18"/>
<dbReference type="HGNC" id="HGNC:29120">
    <property type="gene designation" value="KLHL18"/>
</dbReference>
<dbReference type="HPA" id="ENSG00000114648">
    <property type="expression patterns" value="Low tissue specificity"/>
</dbReference>
<dbReference type="MIM" id="619926">
    <property type="type" value="gene"/>
</dbReference>
<dbReference type="neXtProt" id="NX_O94889"/>
<dbReference type="OpenTargets" id="ENSG00000114648"/>
<dbReference type="PharmGKB" id="PA134920201"/>
<dbReference type="VEuPathDB" id="HostDB:ENSG00000114648"/>
<dbReference type="eggNOG" id="KOG4441">
    <property type="taxonomic scope" value="Eukaryota"/>
</dbReference>
<dbReference type="GeneTree" id="ENSGT00940000157026"/>
<dbReference type="HOGENOM" id="CLU_004253_14_2_1"/>
<dbReference type="InParanoid" id="O94889"/>
<dbReference type="OMA" id="DRWTIVT"/>
<dbReference type="OrthoDB" id="45365at2759"/>
<dbReference type="PAN-GO" id="O94889">
    <property type="GO annotations" value="0 GO annotations based on evolutionary models"/>
</dbReference>
<dbReference type="PhylomeDB" id="O94889"/>
<dbReference type="TreeFam" id="TF329218"/>
<dbReference type="PathwayCommons" id="O94889"/>
<dbReference type="SignaLink" id="O94889"/>
<dbReference type="SIGNOR" id="O94889"/>
<dbReference type="UniPathway" id="UPA00143"/>
<dbReference type="BioGRID-ORCS" id="23276">
    <property type="hits" value="5 hits in 1189 CRISPR screens"/>
</dbReference>
<dbReference type="ChiTaRS" id="KLHL18">
    <property type="organism name" value="human"/>
</dbReference>
<dbReference type="GeneWiki" id="KLHL18"/>
<dbReference type="GenomeRNAi" id="23276"/>
<dbReference type="Pharos" id="O94889">
    <property type="development level" value="Tdark"/>
</dbReference>
<dbReference type="PRO" id="PR:O94889"/>
<dbReference type="Proteomes" id="UP000005640">
    <property type="component" value="Chromosome 3"/>
</dbReference>
<dbReference type="RNAct" id="O94889">
    <property type="molecule type" value="protein"/>
</dbReference>
<dbReference type="Bgee" id="ENSG00000114648">
    <property type="expression patterns" value="Expressed in secondary oocyte and 157 other cell types or tissues"/>
</dbReference>
<dbReference type="ExpressionAtlas" id="O94889">
    <property type="expression patterns" value="baseline and differential"/>
</dbReference>
<dbReference type="GO" id="GO:0031463">
    <property type="term" value="C:Cul3-RING ubiquitin ligase complex"/>
    <property type="evidence" value="ECO:0000318"/>
    <property type="project" value="GO_Central"/>
</dbReference>
<dbReference type="GO" id="GO:0005737">
    <property type="term" value="C:cytoplasm"/>
    <property type="evidence" value="ECO:0000318"/>
    <property type="project" value="GO_Central"/>
</dbReference>
<dbReference type="GO" id="GO:1990756">
    <property type="term" value="F:ubiquitin-like ligase-substrate adaptor activity"/>
    <property type="evidence" value="ECO:0000318"/>
    <property type="project" value="GO_Central"/>
</dbReference>
<dbReference type="GO" id="GO:0051301">
    <property type="term" value="P:cell division"/>
    <property type="evidence" value="ECO:0007669"/>
    <property type="project" value="UniProtKB-KW"/>
</dbReference>
<dbReference type="GO" id="GO:1901992">
    <property type="term" value="P:positive regulation of mitotic cell cycle phase transition"/>
    <property type="evidence" value="ECO:0000315"/>
    <property type="project" value="UniProtKB"/>
</dbReference>
<dbReference type="GO" id="GO:0043161">
    <property type="term" value="P:proteasome-mediated ubiquitin-dependent protein catabolic process"/>
    <property type="evidence" value="ECO:0000318"/>
    <property type="project" value="GO_Central"/>
</dbReference>
<dbReference type="GO" id="GO:0016567">
    <property type="term" value="P:protein ubiquitination"/>
    <property type="evidence" value="ECO:0000314"/>
    <property type="project" value="UniProtKB"/>
</dbReference>
<dbReference type="CDD" id="cd18457">
    <property type="entry name" value="BACK_KLHL18"/>
    <property type="match status" value="1"/>
</dbReference>
<dbReference type="CDD" id="cd18247">
    <property type="entry name" value="BTB_POZ_KLHL18"/>
    <property type="match status" value="1"/>
</dbReference>
<dbReference type="FunFam" id="1.25.40.420:FF:000001">
    <property type="entry name" value="Kelch-like family member 12"/>
    <property type="match status" value="1"/>
</dbReference>
<dbReference type="FunFam" id="3.30.710.10:FF:000001">
    <property type="entry name" value="Kelch-like family member 20"/>
    <property type="match status" value="1"/>
</dbReference>
<dbReference type="Gene3D" id="1.25.40.420">
    <property type="match status" value="1"/>
</dbReference>
<dbReference type="Gene3D" id="2.120.10.80">
    <property type="entry name" value="Kelch-type beta propeller"/>
    <property type="match status" value="2"/>
</dbReference>
<dbReference type="Gene3D" id="3.30.710.10">
    <property type="entry name" value="Potassium Channel Kv1.1, Chain A"/>
    <property type="match status" value="1"/>
</dbReference>
<dbReference type="InterPro" id="IPR011705">
    <property type="entry name" value="BACK"/>
</dbReference>
<dbReference type="InterPro" id="IPR017096">
    <property type="entry name" value="BTB-kelch_protein"/>
</dbReference>
<dbReference type="InterPro" id="IPR000210">
    <property type="entry name" value="BTB/POZ_dom"/>
</dbReference>
<dbReference type="InterPro" id="IPR015915">
    <property type="entry name" value="Kelch-typ_b-propeller"/>
</dbReference>
<dbReference type="InterPro" id="IPR006652">
    <property type="entry name" value="Kelch_1"/>
</dbReference>
<dbReference type="InterPro" id="IPR030603">
    <property type="entry name" value="KLHL18_BTB/POZ"/>
</dbReference>
<dbReference type="InterPro" id="IPR011333">
    <property type="entry name" value="SKP1/BTB/POZ_sf"/>
</dbReference>
<dbReference type="PANTHER" id="PTHR24412">
    <property type="entry name" value="KELCH PROTEIN"/>
    <property type="match status" value="1"/>
</dbReference>
<dbReference type="PANTHER" id="PTHR24412:SF497">
    <property type="entry name" value="KELCH-LIKE PROTEIN 18"/>
    <property type="match status" value="1"/>
</dbReference>
<dbReference type="Pfam" id="PF07707">
    <property type="entry name" value="BACK"/>
    <property type="match status" value="1"/>
</dbReference>
<dbReference type="Pfam" id="PF00651">
    <property type="entry name" value="BTB"/>
    <property type="match status" value="1"/>
</dbReference>
<dbReference type="Pfam" id="PF01344">
    <property type="entry name" value="Kelch_1"/>
    <property type="match status" value="2"/>
</dbReference>
<dbReference type="Pfam" id="PF24681">
    <property type="entry name" value="Kelch_KLHDC2_KLHL20_DRC7"/>
    <property type="match status" value="1"/>
</dbReference>
<dbReference type="PIRSF" id="PIRSF037037">
    <property type="entry name" value="Kelch-like_protein_gigaxonin"/>
    <property type="match status" value="1"/>
</dbReference>
<dbReference type="SMART" id="SM00875">
    <property type="entry name" value="BACK"/>
    <property type="match status" value="1"/>
</dbReference>
<dbReference type="SMART" id="SM00225">
    <property type="entry name" value="BTB"/>
    <property type="match status" value="1"/>
</dbReference>
<dbReference type="SMART" id="SM00612">
    <property type="entry name" value="Kelch"/>
    <property type="match status" value="6"/>
</dbReference>
<dbReference type="SUPFAM" id="SSF117281">
    <property type="entry name" value="Kelch motif"/>
    <property type="match status" value="2"/>
</dbReference>
<dbReference type="SUPFAM" id="SSF54695">
    <property type="entry name" value="POZ domain"/>
    <property type="match status" value="1"/>
</dbReference>
<dbReference type="PROSITE" id="PS50097">
    <property type="entry name" value="BTB"/>
    <property type="match status" value="1"/>
</dbReference>
<protein>
    <recommendedName>
        <fullName>Kelch-like protein 18</fullName>
    </recommendedName>
</protein>